<gene>
    <name evidence="1" type="primary">rplB</name>
    <name evidence="1" type="synonym">rpl2</name>
    <name type="ordered locus">all4212</name>
</gene>
<evidence type="ECO:0000255" key="1">
    <source>
        <dbReference type="HAMAP-Rule" id="MF_01320"/>
    </source>
</evidence>
<evidence type="ECO:0000256" key="2">
    <source>
        <dbReference type="SAM" id="MobiDB-lite"/>
    </source>
</evidence>
<evidence type="ECO:0000305" key="3"/>
<organism>
    <name type="scientific">Nostoc sp. (strain PCC 7120 / SAG 25.82 / UTEX 2576)</name>
    <dbReference type="NCBI Taxonomy" id="103690"/>
    <lineage>
        <taxon>Bacteria</taxon>
        <taxon>Bacillati</taxon>
        <taxon>Cyanobacteriota</taxon>
        <taxon>Cyanophyceae</taxon>
        <taxon>Nostocales</taxon>
        <taxon>Nostocaceae</taxon>
        <taxon>Nostoc</taxon>
    </lineage>
</organism>
<reference key="1">
    <citation type="journal article" date="2001" name="DNA Res.">
        <title>Complete genomic sequence of the filamentous nitrogen-fixing cyanobacterium Anabaena sp. strain PCC 7120.</title>
        <authorList>
            <person name="Kaneko T."/>
            <person name="Nakamura Y."/>
            <person name="Wolk C.P."/>
            <person name="Kuritz T."/>
            <person name="Sasamoto S."/>
            <person name="Watanabe A."/>
            <person name="Iriguchi M."/>
            <person name="Ishikawa A."/>
            <person name="Kawashima K."/>
            <person name="Kimura T."/>
            <person name="Kishida Y."/>
            <person name="Kohara M."/>
            <person name="Matsumoto M."/>
            <person name="Matsuno A."/>
            <person name="Muraki A."/>
            <person name="Nakazaki N."/>
            <person name="Shimpo S."/>
            <person name="Sugimoto M."/>
            <person name="Takazawa M."/>
            <person name="Yamada M."/>
            <person name="Yasuda M."/>
            <person name="Tabata S."/>
        </authorList>
    </citation>
    <scope>NUCLEOTIDE SEQUENCE [LARGE SCALE GENOMIC DNA]</scope>
    <source>
        <strain>PCC 7120 / SAG 25.82 / UTEX 2576</strain>
    </source>
</reference>
<dbReference type="EMBL" id="BA000019">
    <property type="protein sequence ID" value="BAB75911.1"/>
    <property type="molecule type" value="Genomic_DNA"/>
</dbReference>
<dbReference type="PIR" id="AE2332">
    <property type="entry name" value="AE2332"/>
</dbReference>
<dbReference type="RefSeq" id="WP_010998350.1">
    <property type="nucleotide sequence ID" value="NZ_RSCN01000010.1"/>
</dbReference>
<dbReference type="SMR" id="Q8YPI2"/>
<dbReference type="STRING" id="103690.gene:10496261"/>
<dbReference type="GeneID" id="58723352"/>
<dbReference type="KEGG" id="ana:all4212"/>
<dbReference type="eggNOG" id="COG0090">
    <property type="taxonomic scope" value="Bacteria"/>
</dbReference>
<dbReference type="OrthoDB" id="9778722at2"/>
<dbReference type="Proteomes" id="UP000002483">
    <property type="component" value="Chromosome"/>
</dbReference>
<dbReference type="GO" id="GO:0015934">
    <property type="term" value="C:large ribosomal subunit"/>
    <property type="evidence" value="ECO:0007669"/>
    <property type="project" value="InterPro"/>
</dbReference>
<dbReference type="GO" id="GO:0019843">
    <property type="term" value="F:rRNA binding"/>
    <property type="evidence" value="ECO:0007669"/>
    <property type="project" value="UniProtKB-UniRule"/>
</dbReference>
<dbReference type="GO" id="GO:0003735">
    <property type="term" value="F:structural constituent of ribosome"/>
    <property type="evidence" value="ECO:0007669"/>
    <property type="project" value="InterPro"/>
</dbReference>
<dbReference type="GO" id="GO:0016740">
    <property type="term" value="F:transferase activity"/>
    <property type="evidence" value="ECO:0007669"/>
    <property type="project" value="InterPro"/>
</dbReference>
<dbReference type="GO" id="GO:0006412">
    <property type="term" value="P:translation"/>
    <property type="evidence" value="ECO:0007669"/>
    <property type="project" value="UniProtKB-UniRule"/>
</dbReference>
<dbReference type="FunFam" id="2.30.30.30:FF:000001">
    <property type="entry name" value="50S ribosomal protein L2"/>
    <property type="match status" value="1"/>
</dbReference>
<dbReference type="FunFam" id="2.40.50.140:FF:000003">
    <property type="entry name" value="50S ribosomal protein L2"/>
    <property type="match status" value="1"/>
</dbReference>
<dbReference type="FunFam" id="4.10.950.10:FF:000001">
    <property type="entry name" value="50S ribosomal protein L2"/>
    <property type="match status" value="1"/>
</dbReference>
<dbReference type="Gene3D" id="2.30.30.30">
    <property type="match status" value="1"/>
</dbReference>
<dbReference type="Gene3D" id="2.40.50.140">
    <property type="entry name" value="Nucleic acid-binding proteins"/>
    <property type="match status" value="1"/>
</dbReference>
<dbReference type="Gene3D" id="4.10.950.10">
    <property type="entry name" value="Ribosomal protein L2, domain 3"/>
    <property type="match status" value="1"/>
</dbReference>
<dbReference type="HAMAP" id="MF_01320_B">
    <property type="entry name" value="Ribosomal_uL2_B"/>
    <property type="match status" value="1"/>
</dbReference>
<dbReference type="InterPro" id="IPR012340">
    <property type="entry name" value="NA-bd_OB-fold"/>
</dbReference>
<dbReference type="InterPro" id="IPR014722">
    <property type="entry name" value="Rib_uL2_dom2"/>
</dbReference>
<dbReference type="InterPro" id="IPR002171">
    <property type="entry name" value="Ribosomal_uL2"/>
</dbReference>
<dbReference type="InterPro" id="IPR005880">
    <property type="entry name" value="Ribosomal_uL2_bac/org-type"/>
</dbReference>
<dbReference type="InterPro" id="IPR022669">
    <property type="entry name" value="Ribosomal_uL2_C"/>
</dbReference>
<dbReference type="InterPro" id="IPR022671">
    <property type="entry name" value="Ribosomal_uL2_CS"/>
</dbReference>
<dbReference type="InterPro" id="IPR014726">
    <property type="entry name" value="Ribosomal_uL2_dom3"/>
</dbReference>
<dbReference type="InterPro" id="IPR022666">
    <property type="entry name" value="Ribosomal_uL2_RNA-bd_dom"/>
</dbReference>
<dbReference type="InterPro" id="IPR008991">
    <property type="entry name" value="Translation_prot_SH3-like_sf"/>
</dbReference>
<dbReference type="NCBIfam" id="TIGR01171">
    <property type="entry name" value="rplB_bact"/>
    <property type="match status" value="1"/>
</dbReference>
<dbReference type="PANTHER" id="PTHR13691:SF5">
    <property type="entry name" value="LARGE RIBOSOMAL SUBUNIT PROTEIN UL2M"/>
    <property type="match status" value="1"/>
</dbReference>
<dbReference type="PANTHER" id="PTHR13691">
    <property type="entry name" value="RIBOSOMAL PROTEIN L2"/>
    <property type="match status" value="1"/>
</dbReference>
<dbReference type="Pfam" id="PF00181">
    <property type="entry name" value="Ribosomal_L2"/>
    <property type="match status" value="1"/>
</dbReference>
<dbReference type="Pfam" id="PF03947">
    <property type="entry name" value="Ribosomal_L2_C"/>
    <property type="match status" value="1"/>
</dbReference>
<dbReference type="PIRSF" id="PIRSF002158">
    <property type="entry name" value="Ribosomal_L2"/>
    <property type="match status" value="1"/>
</dbReference>
<dbReference type="SMART" id="SM01383">
    <property type="entry name" value="Ribosomal_L2"/>
    <property type="match status" value="1"/>
</dbReference>
<dbReference type="SMART" id="SM01382">
    <property type="entry name" value="Ribosomal_L2_C"/>
    <property type="match status" value="1"/>
</dbReference>
<dbReference type="SUPFAM" id="SSF50249">
    <property type="entry name" value="Nucleic acid-binding proteins"/>
    <property type="match status" value="1"/>
</dbReference>
<dbReference type="SUPFAM" id="SSF50104">
    <property type="entry name" value="Translation proteins SH3-like domain"/>
    <property type="match status" value="1"/>
</dbReference>
<dbReference type="PROSITE" id="PS00467">
    <property type="entry name" value="RIBOSOMAL_L2"/>
    <property type="match status" value="1"/>
</dbReference>
<protein>
    <recommendedName>
        <fullName evidence="1">Large ribosomal subunit protein uL2</fullName>
    </recommendedName>
    <alternativeName>
        <fullName evidence="3">50S ribosomal protein L2</fullName>
    </alternativeName>
</protein>
<feature type="chain" id="PRO_0000129521" description="Large ribosomal subunit protein uL2">
    <location>
        <begin position="1"/>
        <end position="287"/>
    </location>
</feature>
<feature type="region of interest" description="Disordered" evidence="2">
    <location>
        <begin position="203"/>
        <end position="287"/>
    </location>
</feature>
<feature type="compositionally biased region" description="Basic residues" evidence="2">
    <location>
        <begin position="209"/>
        <end position="220"/>
    </location>
</feature>
<feature type="compositionally biased region" description="Basic residues" evidence="2">
    <location>
        <begin position="258"/>
        <end position="287"/>
    </location>
</feature>
<accession>Q8YPI2</accession>
<proteinExistence type="inferred from homology"/>
<sequence length="287" mass="31504">MGTRSYRPYTPSTRQVTISDFAEITKTEPEKSLTVYKHRAKGRNNQGRITSRRRGGGHKRLYRIIDFKRDKRSIPATVIAIEYDPNRNARIALVSYEDGEKRYILHPNNLKVGTVIIAGPESPIEDGNALPLANIPLGTSVHNVELKAGKGGQIVRSAGATAQVVAKEGNYVTLKLPSGEVRLIRRECYATIGQVGNTDARNLSAGKAGRNRWKGRRPKVRGSVMNPVDHPHGGGEGRAPIGRSGPVTPWGKPTLGAKTRKPKKASSKLIIRRRRKSSKRGRGGRES</sequence>
<comment type="function">
    <text evidence="1">One of the primary rRNA binding proteins. Required for association of the 30S and 50S subunits to form the 70S ribosome, for tRNA binding and peptide bond formation. It has been suggested to have peptidyltransferase activity; this is somewhat controversial. Makes several contacts with the 16S rRNA in the 70S ribosome.</text>
</comment>
<comment type="subunit">
    <text evidence="1">Part of the 50S ribosomal subunit. Forms a bridge to the 30S subunit in the 70S ribosome.</text>
</comment>
<comment type="similarity">
    <text evidence="1">Belongs to the universal ribosomal protein uL2 family.</text>
</comment>
<keyword id="KW-1185">Reference proteome</keyword>
<keyword id="KW-0687">Ribonucleoprotein</keyword>
<keyword id="KW-0689">Ribosomal protein</keyword>
<keyword id="KW-0694">RNA-binding</keyword>
<keyword id="KW-0699">rRNA-binding</keyword>
<name>RL2_NOSS1</name>